<comment type="function">
    <text evidence="1">F(1)F(0) ATP synthase produces ATP from ADP in the presence of a proton or sodium gradient. F-type ATPases consist of two structural domains, F(1) containing the extramembraneous catalytic core and F(0) containing the membrane proton channel, linked together by a central stalk and a peripheral stalk. During catalysis, ATP synthesis in the catalytic domain of F(1) is coupled via a rotary mechanism of the central stalk subunits to proton translocation.</text>
</comment>
<comment type="function">
    <text evidence="1">Component of the F(0) channel, it forms part of the peripheral stalk, linking F(1) to F(0).</text>
</comment>
<comment type="subunit">
    <text evidence="1">F-type ATPases have 2 components, F(1) - the catalytic core - and F(0) - the membrane proton channel. F(1) has five subunits: alpha(3), beta(3), gamma(1), delta(1), epsilon(1). F(0) has three main subunits: a(1), b(2) and c(10-14). The alpha and beta chains form an alternating ring which encloses part of the gamma chain. F(1) is attached to F(0) by a central stalk formed by the gamma and epsilon chains, while a peripheral stalk is formed by the delta and b chains.</text>
</comment>
<comment type="subcellular location">
    <subcellularLocation>
        <location evidence="1">Cell inner membrane</location>
        <topology evidence="1">Single-pass membrane protein</topology>
    </subcellularLocation>
</comment>
<comment type="similarity">
    <text evidence="1">Belongs to the ATPase B chain family.</text>
</comment>
<evidence type="ECO:0000255" key="1">
    <source>
        <dbReference type="HAMAP-Rule" id="MF_01398"/>
    </source>
</evidence>
<evidence type="ECO:0000256" key="2">
    <source>
        <dbReference type="SAM" id="MobiDB-lite"/>
    </source>
</evidence>
<name>ATPF1_BRUC2</name>
<accession>A9M8G0</accession>
<feature type="chain" id="PRO_0000368369" description="ATP synthase subunit b 1">
    <location>
        <begin position="1"/>
        <end position="208"/>
    </location>
</feature>
<feature type="transmembrane region" description="Helical" evidence="1">
    <location>
        <begin position="56"/>
        <end position="78"/>
    </location>
</feature>
<feature type="region of interest" description="Disordered" evidence="2">
    <location>
        <begin position="1"/>
        <end position="26"/>
    </location>
</feature>
<feature type="compositionally biased region" description="Polar residues" evidence="2">
    <location>
        <begin position="1"/>
        <end position="18"/>
    </location>
</feature>
<dbReference type="EMBL" id="CP000872">
    <property type="protein sequence ID" value="ABX61476.1"/>
    <property type="molecule type" value="Genomic_DNA"/>
</dbReference>
<dbReference type="RefSeq" id="WP_002963545.1">
    <property type="nucleotide sequence ID" value="NC_010103.1"/>
</dbReference>
<dbReference type="SMR" id="A9M8G0"/>
<dbReference type="KEGG" id="bcs:BCAN_A0389"/>
<dbReference type="HOGENOM" id="CLU_079215_1_2_5"/>
<dbReference type="PhylomeDB" id="A9M8G0"/>
<dbReference type="Proteomes" id="UP000001385">
    <property type="component" value="Chromosome I"/>
</dbReference>
<dbReference type="GO" id="GO:0005886">
    <property type="term" value="C:plasma membrane"/>
    <property type="evidence" value="ECO:0007669"/>
    <property type="project" value="UniProtKB-SubCell"/>
</dbReference>
<dbReference type="GO" id="GO:0045259">
    <property type="term" value="C:proton-transporting ATP synthase complex"/>
    <property type="evidence" value="ECO:0007669"/>
    <property type="project" value="UniProtKB-KW"/>
</dbReference>
<dbReference type="GO" id="GO:0046933">
    <property type="term" value="F:proton-transporting ATP synthase activity, rotational mechanism"/>
    <property type="evidence" value="ECO:0007669"/>
    <property type="project" value="UniProtKB-UniRule"/>
</dbReference>
<dbReference type="GO" id="GO:0046961">
    <property type="term" value="F:proton-transporting ATPase activity, rotational mechanism"/>
    <property type="evidence" value="ECO:0007669"/>
    <property type="project" value="TreeGrafter"/>
</dbReference>
<dbReference type="CDD" id="cd06503">
    <property type="entry name" value="ATP-synt_Fo_b"/>
    <property type="match status" value="1"/>
</dbReference>
<dbReference type="Gene3D" id="6.10.250.1580">
    <property type="match status" value="1"/>
</dbReference>
<dbReference type="HAMAP" id="MF_01398">
    <property type="entry name" value="ATP_synth_b_bprime"/>
    <property type="match status" value="1"/>
</dbReference>
<dbReference type="InterPro" id="IPR002146">
    <property type="entry name" value="ATP_synth_b/b'su_bac/chlpt"/>
</dbReference>
<dbReference type="InterPro" id="IPR050059">
    <property type="entry name" value="ATP_synthase_B_chain"/>
</dbReference>
<dbReference type="NCBIfam" id="NF006612">
    <property type="entry name" value="PRK09174.1"/>
    <property type="match status" value="1"/>
</dbReference>
<dbReference type="PANTHER" id="PTHR33445:SF1">
    <property type="entry name" value="ATP SYNTHASE SUBUNIT B"/>
    <property type="match status" value="1"/>
</dbReference>
<dbReference type="PANTHER" id="PTHR33445">
    <property type="entry name" value="ATP SYNTHASE SUBUNIT B', CHLOROPLASTIC"/>
    <property type="match status" value="1"/>
</dbReference>
<dbReference type="Pfam" id="PF00430">
    <property type="entry name" value="ATP-synt_B"/>
    <property type="match status" value="1"/>
</dbReference>
<organism>
    <name type="scientific">Brucella canis (strain ATCC 23365 / NCTC 10854 / RM-666)</name>
    <dbReference type="NCBI Taxonomy" id="483179"/>
    <lineage>
        <taxon>Bacteria</taxon>
        <taxon>Pseudomonadati</taxon>
        <taxon>Pseudomonadota</taxon>
        <taxon>Alphaproteobacteria</taxon>
        <taxon>Hyphomicrobiales</taxon>
        <taxon>Brucellaceae</taxon>
        <taxon>Brucella/Ochrobactrum group</taxon>
        <taxon>Brucella</taxon>
    </lineage>
</organism>
<keyword id="KW-0066">ATP synthesis</keyword>
<keyword id="KW-0997">Cell inner membrane</keyword>
<keyword id="KW-1003">Cell membrane</keyword>
<keyword id="KW-0138">CF(0)</keyword>
<keyword id="KW-0375">Hydrogen ion transport</keyword>
<keyword id="KW-0406">Ion transport</keyword>
<keyword id="KW-0472">Membrane</keyword>
<keyword id="KW-1185">Reference proteome</keyword>
<keyword id="KW-0812">Transmembrane</keyword>
<keyword id="KW-1133">Transmembrane helix</keyword>
<keyword id="KW-0813">Transport</keyword>
<proteinExistence type="inferred from homology"/>
<gene>
    <name evidence="1" type="primary">atpF1</name>
    <name type="ordered locus">BCAN_A0389</name>
</gene>
<sequence>MFVSTAFAQTATESQPASTAGEHGAADAVHTETGVAHDAGHGSGVFPPFDSTHYASQVLWLAITFGLFYLFLSRVVLPRIGGVIETRRDRIAQDLEQAARLKQDADNAIAAYEQELAQARSKAASIAEAAREKGKGEADAERASAEAVLESKLKEAEERIAAIKAKAMSDVGNIAEETTATIVEQLLGLTADKASVSEAVKAIRASNA</sequence>
<protein>
    <recommendedName>
        <fullName evidence="1">ATP synthase subunit b 1</fullName>
    </recommendedName>
    <alternativeName>
        <fullName evidence="1">ATP synthase F(0) sector subunit b 1</fullName>
    </alternativeName>
    <alternativeName>
        <fullName evidence="1">ATPase subunit I 1</fullName>
    </alternativeName>
    <alternativeName>
        <fullName evidence="1">F-type ATPase subunit b 1</fullName>
        <shortName evidence="1">F-ATPase subunit b 1</shortName>
    </alternativeName>
</protein>
<reference key="1">
    <citation type="submission" date="2007-10" db="EMBL/GenBank/DDBJ databases">
        <title>Brucella canis ATCC 23365 whole genome shotgun sequencing project.</title>
        <authorList>
            <person name="Setubal J.C."/>
            <person name="Bowns C."/>
            <person name="Boyle S."/>
            <person name="Crasta O.R."/>
            <person name="Czar M.J."/>
            <person name="Dharmanolla C."/>
            <person name="Gillespie J.J."/>
            <person name="Kenyon R.W."/>
            <person name="Lu J."/>
            <person name="Mane S."/>
            <person name="Mohapatra S."/>
            <person name="Nagrani S."/>
            <person name="Purkayastha A."/>
            <person name="Rajasimha H.K."/>
            <person name="Shallom J.M."/>
            <person name="Shallom S."/>
            <person name="Shukla M."/>
            <person name="Snyder E.E."/>
            <person name="Sobral B.W."/>
            <person name="Wattam A.R."/>
            <person name="Will R."/>
            <person name="Williams K."/>
            <person name="Yoo H."/>
            <person name="Bruce D."/>
            <person name="Detter C."/>
            <person name="Munk C."/>
            <person name="Brettin T.S."/>
        </authorList>
    </citation>
    <scope>NUCLEOTIDE SEQUENCE [LARGE SCALE GENOMIC DNA]</scope>
    <source>
        <strain>ATCC 23365 / NCTC 10854 / RM-666</strain>
    </source>
</reference>